<sequence>MAILSSALVTIDLPVTLVSLLVGSIFYFCYLTVYRLFLSPIAHFPGPKLAAWTYWYEFWYDVIAEPEYTFKIGRLHKIYGPVVRINPDEIHIADPDFYDTIYAGSGRKRDKWDWITRSFGVDESLIGTLKHDEHRVRRASLSPYFSKQSVRALQPLIDRNMAILLDRLREFAKSGSPLKLDDAYAALTNDIVEDYAFGRSDHRLEAPDFDPSFRDAMLQGGKAGHVLKHFTWLMDLLKKLPDSLLLKLSPAMGAYSQLQTSVKRQVAEIQHAHQMHTYDKTRRTIFHEILNSKLSDYDKSTDRLWQEGEVVVAAGTITTAWALGVSTYFVLATPDILRKLKTELEAAIPDPSQPLNLITLEALPFLTGVVQEGVRLSHAISHRLHRICPDETLIYQDNDNQREWRIPPGTPLSMTSNLVHHDERVFPDSHAFKPERWLDNARLERYLVSFGKGGRACLGINLAYAELYLTLAALFRVYGTEQVKGKDDVGTLQLFETSAADLVITSDTVVPVMPEDSKGLRVKVS</sequence>
<comment type="function">
    <text evidence="3 4">Cytochrome P450 monooxygenase; part of the gene cluster that mediates the biosynthesis of terpestacin (PubMed:29185768). The bifunctional terpene synthase tpcA converts isopentenyl diphosphate (IPP) and dimethylallyl diphosphate (DMAPP) into the sesterterpene preterpestacin I (PubMed:29185768). The C-terminal prenyltransferase (PT) domain of tpcA catalyzes formation of GFPP, whereas the N-terminal terpene cyclase (TC) domain catalyzes the cyclization of GFPP into preterpestacin I (PubMed:29185768). The cytochrome P450 monooxygenase tpcB then hydroxylates preterpestacin I to yield 24-hydroxypreterpstacin I (renamed as preterpestacin II) whereas the cytochrome P450 monooxygenase tpcC further hydroxylates preterpestacin II to yield 16,17-dihydroxypreterpestacin II (renamed as preterpestacin III) (PubMed:29417814). Finally, the FAD-dependent monooxygenase tpcD converts preterpestacin III into terpestacin (PubMed:29417814).</text>
</comment>
<comment type="cofactor">
    <cofactor evidence="1">
        <name>heme</name>
        <dbReference type="ChEBI" id="CHEBI:30413"/>
    </cofactor>
</comment>
<comment type="pathway">
    <text evidence="4">Secondary metabolite biosynthesis; terpenoid biosynthesis.</text>
</comment>
<comment type="subcellular location">
    <subcellularLocation>
        <location evidence="2">Membrane</location>
        <topology evidence="2">Single-pass membrane protein</topology>
    </subcellularLocation>
</comment>
<comment type="similarity">
    <text evidence="6">Belongs to the cytochrome P450 family.</text>
</comment>
<keyword id="KW-0349">Heme</keyword>
<keyword id="KW-0408">Iron</keyword>
<keyword id="KW-0472">Membrane</keyword>
<keyword id="KW-0479">Metal-binding</keyword>
<keyword id="KW-0503">Monooxygenase</keyword>
<keyword id="KW-0560">Oxidoreductase</keyword>
<keyword id="KW-1185">Reference proteome</keyword>
<keyword id="KW-0812">Transmembrane</keyword>
<keyword id="KW-1133">Transmembrane helix</keyword>
<organism>
    <name type="scientific">Cochliobolus heterostrophus (strain C5 / ATCC 48332 / race O)</name>
    <name type="common">Southern corn leaf blight fungus</name>
    <name type="synonym">Bipolaris maydis</name>
    <dbReference type="NCBI Taxonomy" id="701091"/>
    <lineage>
        <taxon>Eukaryota</taxon>
        <taxon>Fungi</taxon>
        <taxon>Dikarya</taxon>
        <taxon>Ascomycota</taxon>
        <taxon>Pezizomycotina</taxon>
        <taxon>Dothideomycetes</taxon>
        <taxon>Pleosporomycetidae</taxon>
        <taxon>Pleosporales</taxon>
        <taxon>Pleosporineae</taxon>
        <taxon>Pleosporaceae</taxon>
        <taxon>Bipolaris</taxon>
    </lineage>
</organism>
<reference key="1">
    <citation type="journal article" date="2012" name="PLoS Pathog.">
        <title>Diverse lifestyles and strategies of plant pathogenesis encoded in the genomes of eighteen Dothideomycetes fungi.</title>
        <authorList>
            <person name="Ohm R.A."/>
            <person name="Feau N."/>
            <person name="Henrissat B."/>
            <person name="Schoch C.L."/>
            <person name="Horwitz B.A."/>
            <person name="Barry K.W."/>
            <person name="Condon B.J."/>
            <person name="Copeland A.C."/>
            <person name="Dhillon B."/>
            <person name="Glaser F."/>
            <person name="Hesse C.N."/>
            <person name="Kosti I."/>
            <person name="LaButti K."/>
            <person name="Lindquist E.A."/>
            <person name="Lucas S."/>
            <person name="Salamov A.A."/>
            <person name="Bradshaw R.E."/>
            <person name="Ciuffetti L."/>
            <person name="Hamelin R.C."/>
            <person name="Kema G.H.J."/>
            <person name="Lawrence C."/>
            <person name="Scott J.A."/>
            <person name="Spatafora J.W."/>
            <person name="Turgeon B.G."/>
            <person name="de Wit P.J.G.M."/>
            <person name="Zhong S."/>
            <person name="Goodwin S.B."/>
            <person name="Grigoriev I.V."/>
        </authorList>
    </citation>
    <scope>NUCLEOTIDE SEQUENCE [LARGE SCALE GENOMIC DNA]</scope>
    <source>
        <strain>C5 / ATCC 48332 / race O</strain>
    </source>
</reference>
<reference key="2">
    <citation type="journal article" date="2013" name="PLoS Genet.">
        <title>Comparative genome structure, secondary metabolite, and effector coding capacity across Cochliobolus pathogens.</title>
        <authorList>
            <person name="Condon B.J."/>
            <person name="Leng Y."/>
            <person name="Wu D."/>
            <person name="Bushley K.E."/>
            <person name="Ohm R.A."/>
            <person name="Otillar R."/>
            <person name="Martin J."/>
            <person name="Schackwitz W."/>
            <person name="Grimwood J."/>
            <person name="MohdZainudin N."/>
            <person name="Xue C."/>
            <person name="Wang R."/>
            <person name="Manning V.A."/>
            <person name="Dhillon B."/>
            <person name="Tu Z.J."/>
            <person name="Steffenson B.J."/>
            <person name="Salamov A."/>
            <person name="Sun H."/>
            <person name="Lowry S."/>
            <person name="LaButti K."/>
            <person name="Han J."/>
            <person name="Copeland A."/>
            <person name="Lindquist E."/>
            <person name="Barry K."/>
            <person name="Schmutz J."/>
            <person name="Baker S.E."/>
            <person name="Ciuffetti L.M."/>
            <person name="Grigoriev I.V."/>
            <person name="Zhong S."/>
            <person name="Turgeon B.G."/>
        </authorList>
    </citation>
    <scope>NUCLEOTIDE SEQUENCE [LARGE SCALE GENOMIC DNA]</scope>
    <source>
        <strain>C5 / ATCC 48332 / race O</strain>
    </source>
</reference>
<reference key="3">
    <citation type="journal article" date="2017" name="Org. Lett.">
        <title>Focused genome mining of structurally related sesterterpenes: enzymatic formation of enantiomeric and diastereomeric products.</title>
        <authorList>
            <person name="Narita K."/>
            <person name="Sato H."/>
            <person name="Minami A."/>
            <person name="Kudo K."/>
            <person name="Gao L."/>
            <person name="Liu C."/>
            <person name="Ozaki T."/>
            <person name="Kodama M."/>
            <person name="Lei X."/>
            <person name="Taniguchi T."/>
            <person name="Monde K."/>
            <person name="Yamazaki M."/>
            <person name="Uchiyama M."/>
            <person name="Oikawa H."/>
        </authorList>
    </citation>
    <scope>FUNCTION</scope>
</reference>
<reference key="4">
    <citation type="journal article" date="2018" name="J. Org. Chem.">
        <title>Total biosynthesis of antiangiogenic agent (-)-terpestacin by artificial reconstitution of the biosynthetic machinery in Aspergillus oryzae.</title>
        <authorList>
            <person name="Narita K."/>
            <person name="Minami A."/>
            <person name="Ozaki T."/>
            <person name="Liu C."/>
            <person name="Kodama M."/>
            <person name="Oikawa H."/>
        </authorList>
    </citation>
    <scope>FUNCTION</scope>
    <scope>CATALYTIC ACTIVITY</scope>
    <scope>PATHWAY</scope>
</reference>
<protein>
    <recommendedName>
        <fullName evidence="5">Cytochrome P450 monooxygenase tpcC</fullName>
        <ecNumber evidence="4">1.-.-.-</ecNumber>
    </recommendedName>
    <alternativeName>
        <fullName evidence="5">Terpestacin biosynthesis cluster protein C</fullName>
    </alternativeName>
</protein>
<name>TPCC_COCH5</name>
<dbReference type="EC" id="1.-.-.-" evidence="4"/>
<dbReference type="EMBL" id="KB445573">
    <property type="protein sequence ID" value="EMD93706.1"/>
    <property type="molecule type" value="Genomic_DNA"/>
</dbReference>
<dbReference type="SMR" id="M2UJ60"/>
<dbReference type="STRING" id="701091.M2UJ60"/>
<dbReference type="eggNOG" id="KOG0158">
    <property type="taxonomic scope" value="Eukaryota"/>
</dbReference>
<dbReference type="HOGENOM" id="CLU_001570_14_4_1"/>
<dbReference type="OMA" id="VYHDREN"/>
<dbReference type="OrthoDB" id="15324at28556"/>
<dbReference type="UniPathway" id="UPA00213"/>
<dbReference type="Proteomes" id="UP000016936">
    <property type="component" value="Unassembled WGS sequence"/>
</dbReference>
<dbReference type="GO" id="GO:0016020">
    <property type="term" value="C:membrane"/>
    <property type="evidence" value="ECO:0007669"/>
    <property type="project" value="UniProtKB-SubCell"/>
</dbReference>
<dbReference type="GO" id="GO:0020037">
    <property type="term" value="F:heme binding"/>
    <property type="evidence" value="ECO:0007669"/>
    <property type="project" value="InterPro"/>
</dbReference>
<dbReference type="GO" id="GO:0005506">
    <property type="term" value="F:iron ion binding"/>
    <property type="evidence" value="ECO:0007669"/>
    <property type="project" value="InterPro"/>
</dbReference>
<dbReference type="GO" id="GO:0004497">
    <property type="term" value="F:monooxygenase activity"/>
    <property type="evidence" value="ECO:0007669"/>
    <property type="project" value="UniProtKB-KW"/>
</dbReference>
<dbReference type="GO" id="GO:0016705">
    <property type="term" value="F:oxidoreductase activity, acting on paired donors, with incorporation or reduction of molecular oxygen"/>
    <property type="evidence" value="ECO:0007669"/>
    <property type="project" value="InterPro"/>
</dbReference>
<dbReference type="GO" id="GO:0016114">
    <property type="term" value="P:terpenoid biosynthetic process"/>
    <property type="evidence" value="ECO:0007669"/>
    <property type="project" value="UniProtKB-UniPathway"/>
</dbReference>
<dbReference type="CDD" id="cd11062">
    <property type="entry name" value="CYP58-like"/>
    <property type="match status" value="1"/>
</dbReference>
<dbReference type="FunFam" id="1.10.630.10:FF:000069">
    <property type="entry name" value="Cytochrome P450, putative (Eurofung)"/>
    <property type="match status" value="1"/>
</dbReference>
<dbReference type="Gene3D" id="1.10.630.10">
    <property type="entry name" value="Cytochrome P450"/>
    <property type="match status" value="1"/>
</dbReference>
<dbReference type="InterPro" id="IPR001128">
    <property type="entry name" value="Cyt_P450"/>
</dbReference>
<dbReference type="InterPro" id="IPR017972">
    <property type="entry name" value="Cyt_P450_CS"/>
</dbReference>
<dbReference type="InterPro" id="IPR002401">
    <property type="entry name" value="Cyt_P450_E_grp-I"/>
</dbReference>
<dbReference type="InterPro" id="IPR036396">
    <property type="entry name" value="Cyt_P450_sf"/>
</dbReference>
<dbReference type="InterPro" id="IPR050121">
    <property type="entry name" value="Cytochrome_P450_monoxygenase"/>
</dbReference>
<dbReference type="PANTHER" id="PTHR24305">
    <property type="entry name" value="CYTOCHROME P450"/>
    <property type="match status" value="1"/>
</dbReference>
<dbReference type="PANTHER" id="PTHR24305:SF157">
    <property type="entry name" value="N-ACETYLTRYPTOPHAN 6-HYDROXYLASE IVOC-RELATED"/>
    <property type="match status" value="1"/>
</dbReference>
<dbReference type="Pfam" id="PF00067">
    <property type="entry name" value="p450"/>
    <property type="match status" value="1"/>
</dbReference>
<dbReference type="PRINTS" id="PR00463">
    <property type="entry name" value="EP450I"/>
</dbReference>
<dbReference type="SUPFAM" id="SSF48264">
    <property type="entry name" value="Cytochrome P450"/>
    <property type="match status" value="1"/>
</dbReference>
<dbReference type="PROSITE" id="PS00086">
    <property type="entry name" value="CYTOCHROME_P450"/>
    <property type="match status" value="1"/>
</dbReference>
<accession>M2UJ60</accession>
<gene>
    <name evidence="5" type="primary">tpcC</name>
    <name type="ORF">COCHEDRAFT_1212392</name>
</gene>
<feature type="chain" id="PRO_0000453716" description="Cytochrome P450 monooxygenase tpcC">
    <location>
        <begin position="1"/>
        <end position="525"/>
    </location>
</feature>
<feature type="transmembrane region" description="Helical" evidence="2">
    <location>
        <begin position="13"/>
        <end position="33"/>
    </location>
</feature>
<feature type="binding site" description="axial binding residue" evidence="1">
    <location>
        <position position="457"/>
    </location>
    <ligand>
        <name>heme</name>
        <dbReference type="ChEBI" id="CHEBI:30413"/>
    </ligand>
    <ligandPart>
        <name>Fe</name>
        <dbReference type="ChEBI" id="CHEBI:18248"/>
    </ligandPart>
</feature>
<proteinExistence type="evidence at protein level"/>
<evidence type="ECO:0000250" key="1">
    <source>
        <dbReference type="UniProtKB" id="P04798"/>
    </source>
</evidence>
<evidence type="ECO:0000255" key="2"/>
<evidence type="ECO:0000269" key="3">
    <source>
    </source>
</evidence>
<evidence type="ECO:0000269" key="4">
    <source>
    </source>
</evidence>
<evidence type="ECO:0000303" key="5">
    <source>
    </source>
</evidence>
<evidence type="ECO:0000305" key="6"/>